<name>EFP_VIBC3</name>
<evidence type="ECO:0000255" key="1">
    <source>
        <dbReference type="HAMAP-Rule" id="MF_00141"/>
    </source>
</evidence>
<proteinExistence type="inferred from homology"/>
<keyword id="KW-0963">Cytoplasm</keyword>
<keyword id="KW-0251">Elongation factor</keyword>
<keyword id="KW-0379">Hydroxylation</keyword>
<keyword id="KW-0648">Protein biosynthesis</keyword>
<reference key="1">
    <citation type="submission" date="2007-03" db="EMBL/GenBank/DDBJ databases">
        <authorList>
            <person name="Heidelberg J."/>
        </authorList>
    </citation>
    <scope>NUCLEOTIDE SEQUENCE [LARGE SCALE GENOMIC DNA]</scope>
    <source>
        <strain>ATCC 39541 / Classical Ogawa 395 / O395</strain>
    </source>
</reference>
<reference key="2">
    <citation type="journal article" date="2008" name="PLoS ONE">
        <title>A recalibrated molecular clock and independent origins for the cholera pandemic clones.</title>
        <authorList>
            <person name="Feng L."/>
            <person name="Reeves P.R."/>
            <person name="Lan R."/>
            <person name="Ren Y."/>
            <person name="Gao C."/>
            <person name="Zhou Z."/>
            <person name="Ren Y."/>
            <person name="Cheng J."/>
            <person name="Wang W."/>
            <person name="Wang J."/>
            <person name="Qian W."/>
            <person name="Li D."/>
            <person name="Wang L."/>
        </authorList>
    </citation>
    <scope>NUCLEOTIDE SEQUENCE [LARGE SCALE GENOMIC DNA]</scope>
    <source>
        <strain>ATCC 39541 / Classical Ogawa 395 / O395</strain>
    </source>
</reference>
<accession>A5F4X8</accession>
<accession>C3LXQ8</accession>
<feature type="chain" id="PRO_1000071461" description="Elongation factor P">
    <location>
        <begin position="1"/>
        <end position="188"/>
    </location>
</feature>
<feature type="modified residue" description="N6-(3,6-diaminohexanoyl)-5-hydroxylysine" evidence="1">
    <location>
        <position position="34"/>
    </location>
</feature>
<protein>
    <recommendedName>
        <fullName evidence="1">Elongation factor P</fullName>
        <shortName evidence="1">EF-P</shortName>
    </recommendedName>
</protein>
<organism>
    <name type="scientific">Vibrio cholerae serotype O1 (strain ATCC 39541 / Classical Ogawa 395 / O395)</name>
    <dbReference type="NCBI Taxonomy" id="345073"/>
    <lineage>
        <taxon>Bacteria</taxon>
        <taxon>Pseudomonadati</taxon>
        <taxon>Pseudomonadota</taxon>
        <taxon>Gammaproteobacteria</taxon>
        <taxon>Vibrionales</taxon>
        <taxon>Vibrionaceae</taxon>
        <taxon>Vibrio</taxon>
    </lineage>
</organism>
<gene>
    <name evidence="1" type="primary">efp</name>
    <name type="ordered locus">VC0395_A2234</name>
    <name type="ordered locus">VC395_2773</name>
</gene>
<dbReference type="EMBL" id="CP000627">
    <property type="protein sequence ID" value="ABQ20329.1"/>
    <property type="molecule type" value="Genomic_DNA"/>
</dbReference>
<dbReference type="EMBL" id="CP001235">
    <property type="protein sequence ID" value="ACP10758.1"/>
    <property type="molecule type" value="Genomic_DNA"/>
</dbReference>
<dbReference type="RefSeq" id="WP_000246893.1">
    <property type="nucleotide sequence ID" value="NZ_JAACZH010000007.1"/>
</dbReference>
<dbReference type="SMR" id="A5F4X8"/>
<dbReference type="GeneID" id="88785215"/>
<dbReference type="KEGG" id="vco:VC0395_A2234"/>
<dbReference type="KEGG" id="vcr:VC395_2773"/>
<dbReference type="PATRIC" id="fig|345073.21.peg.2671"/>
<dbReference type="eggNOG" id="COG0231">
    <property type="taxonomic scope" value="Bacteria"/>
</dbReference>
<dbReference type="HOGENOM" id="CLU_074944_0_0_6"/>
<dbReference type="OrthoDB" id="9801844at2"/>
<dbReference type="UniPathway" id="UPA00345"/>
<dbReference type="Proteomes" id="UP000000249">
    <property type="component" value="Chromosome 2"/>
</dbReference>
<dbReference type="GO" id="GO:0005737">
    <property type="term" value="C:cytoplasm"/>
    <property type="evidence" value="ECO:0007669"/>
    <property type="project" value="UniProtKB-SubCell"/>
</dbReference>
<dbReference type="GO" id="GO:0003746">
    <property type="term" value="F:translation elongation factor activity"/>
    <property type="evidence" value="ECO:0007669"/>
    <property type="project" value="UniProtKB-UniRule"/>
</dbReference>
<dbReference type="GO" id="GO:0043043">
    <property type="term" value="P:peptide biosynthetic process"/>
    <property type="evidence" value="ECO:0007669"/>
    <property type="project" value="InterPro"/>
</dbReference>
<dbReference type="CDD" id="cd04470">
    <property type="entry name" value="S1_EF-P_repeat_1"/>
    <property type="match status" value="1"/>
</dbReference>
<dbReference type="CDD" id="cd05794">
    <property type="entry name" value="S1_EF-P_repeat_2"/>
    <property type="match status" value="1"/>
</dbReference>
<dbReference type="FunFam" id="2.30.30.30:FF:000003">
    <property type="entry name" value="Elongation factor P"/>
    <property type="match status" value="1"/>
</dbReference>
<dbReference type="FunFam" id="2.40.50.140:FF:000004">
    <property type="entry name" value="Elongation factor P"/>
    <property type="match status" value="1"/>
</dbReference>
<dbReference type="FunFam" id="2.40.50.140:FF:000009">
    <property type="entry name" value="Elongation factor P"/>
    <property type="match status" value="1"/>
</dbReference>
<dbReference type="Gene3D" id="2.30.30.30">
    <property type="match status" value="1"/>
</dbReference>
<dbReference type="Gene3D" id="2.40.50.140">
    <property type="entry name" value="Nucleic acid-binding proteins"/>
    <property type="match status" value="2"/>
</dbReference>
<dbReference type="HAMAP" id="MF_00141">
    <property type="entry name" value="EF_P"/>
    <property type="match status" value="1"/>
</dbReference>
<dbReference type="InterPro" id="IPR015365">
    <property type="entry name" value="Elong-fact-P_C"/>
</dbReference>
<dbReference type="InterPro" id="IPR012340">
    <property type="entry name" value="NA-bd_OB-fold"/>
</dbReference>
<dbReference type="InterPro" id="IPR014722">
    <property type="entry name" value="Rib_uL2_dom2"/>
</dbReference>
<dbReference type="InterPro" id="IPR020599">
    <property type="entry name" value="Transl_elong_fac_P/YeiP"/>
</dbReference>
<dbReference type="InterPro" id="IPR013185">
    <property type="entry name" value="Transl_elong_KOW-like"/>
</dbReference>
<dbReference type="InterPro" id="IPR001059">
    <property type="entry name" value="Transl_elong_P/YeiP_cen"/>
</dbReference>
<dbReference type="InterPro" id="IPR013852">
    <property type="entry name" value="Transl_elong_P/YeiP_CS"/>
</dbReference>
<dbReference type="InterPro" id="IPR011768">
    <property type="entry name" value="Transl_elongation_fac_P"/>
</dbReference>
<dbReference type="InterPro" id="IPR008991">
    <property type="entry name" value="Translation_prot_SH3-like_sf"/>
</dbReference>
<dbReference type="NCBIfam" id="TIGR00038">
    <property type="entry name" value="efp"/>
    <property type="match status" value="1"/>
</dbReference>
<dbReference type="NCBIfam" id="NF001810">
    <property type="entry name" value="PRK00529.1"/>
    <property type="match status" value="1"/>
</dbReference>
<dbReference type="PANTHER" id="PTHR30053">
    <property type="entry name" value="ELONGATION FACTOR P"/>
    <property type="match status" value="1"/>
</dbReference>
<dbReference type="PANTHER" id="PTHR30053:SF12">
    <property type="entry name" value="ELONGATION FACTOR P (EF-P) FAMILY PROTEIN"/>
    <property type="match status" value="1"/>
</dbReference>
<dbReference type="Pfam" id="PF01132">
    <property type="entry name" value="EFP"/>
    <property type="match status" value="1"/>
</dbReference>
<dbReference type="Pfam" id="PF08207">
    <property type="entry name" value="EFP_N"/>
    <property type="match status" value="1"/>
</dbReference>
<dbReference type="Pfam" id="PF09285">
    <property type="entry name" value="Elong-fact-P_C"/>
    <property type="match status" value="1"/>
</dbReference>
<dbReference type="PIRSF" id="PIRSF005901">
    <property type="entry name" value="EF-P"/>
    <property type="match status" value="1"/>
</dbReference>
<dbReference type="SMART" id="SM01185">
    <property type="entry name" value="EFP"/>
    <property type="match status" value="1"/>
</dbReference>
<dbReference type="SMART" id="SM00841">
    <property type="entry name" value="Elong-fact-P_C"/>
    <property type="match status" value="1"/>
</dbReference>
<dbReference type="SUPFAM" id="SSF50249">
    <property type="entry name" value="Nucleic acid-binding proteins"/>
    <property type="match status" value="2"/>
</dbReference>
<dbReference type="SUPFAM" id="SSF50104">
    <property type="entry name" value="Translation proteins SH3-like domain"/>
    <property type="match status" value="1"/>
</dbReference>
<dbReference type="PROSITE" id="PS01275">
    <property type="entry name" value="EFP"/>
    <property type="match status" value="1"/>
</dbReference>
<sequence>MATVSTNEFKGGLKIMLDNEPCVILENEYVKPGKGQAFNRVRIRKLLTGKVLEKTFKSGDTAEVADVVDIDLDYLYNDGEFYHFMNNSTFEQLAADAKAVGENAKWLVENNTCMLTLWNGNPIAVTPPNFVELEVTETDPGVKGDTQGTGGKPATLSTGAVVRVPLFVQIGEVIKVDTRSAEYVGRVK</sequence>
<comment type="function">
    <text evidence="1">Involved in peptide bond synthesis. Alleviates ribosome stalling that occurs when 3 or more consecutive Pro residues or the sequence PPG is present in a protein, possibly by augmenting the peptidyl transferase activity of the ribosome. Modification of Lys-34 is required for alleviation.</text>
</comment>
<comment type="pathway">
    <text evidence="1">Protein biosynthesis; polypeptide chain elongation.</text>
</comment>
<comment type="subcellular location">
    <subcellularLocation>
        <location evidence="1">Cytoplasm</location>
    </subcellularLocation>
</comment>
<comment type="PTM">
    <text evidence="1">May be beta-lysylated on the epsilon-amino group of Lys-34 by the combined action of EpmA and EpmB, and then hydroxylated on the C5 position of the same residue by EpmC (if this protein is present). Lysylation is critical for the stimulatory effect of EF-P on peptide-bond formation. The lysylation moiety may extend toward the peptidyltransferase center and stabilize the terminal 3-CCA end of the tRNA. Hydroxylation of the C5 position on Lys-34 may allow additional potential stabilizing hydrogen-bond interactions with the P-tRNA.</text>
</comment>
<comment type="similarity">
    <text evidence="1">Belongs to the elongation factor P family.</text>
</comment>